<feature type="chain" id="PRO_0000331709" description="Homeobox-leucine zipper protein HOX18">
    <location>
        <begin position="1"/>
        <end position="256"/>
    </location>
</feature>
<feature type="DNA-binding region" description="Homeobox" evidence="2">
    <location>
        <begin position="112"/>
        <end position="171"/>
    </location>
</feature>
<feature type="region of interest" description="Disordered" evidence="3">
    <location>
        <begin position="52"/>
        <end position="116"/>
    </location>
</feature>
<feature type="region of interest" description="Leucine-zipper">
    <location>
        <begin position="170"/>
        <end position="214"/>
    </location>
</feature>
<feature type="compositionally biased region" description="Gly residues" evidence="3">
    <location>
        <begin position="102"/>
        <end position="112"/>
    </location>
</feature>
<sequence>MEGEDLGSWLGLGIGGGGYAYGGDDCRRSPSSPSPVQMLFSQHVKEEITRGYDHGRDEEQASGSKIMKGERGARLRVMRSIRNSGGDGSRSRVLSLGDDGGDGGSGGGGGGGTRKKLQLTKEQSTLLEDSFRVHNILSHAQKHELARQLKLKPRQVEVWFQNRRARTKLKQTEVDCEFLKRCCESLTEENKQLKHELMELRRLASPAAAAAGSQLYVQFPRAAAAAMVNVCPSCEKVTVMGGGGGETGKSSSSYSS</sequence>
<dbReference type="EMBL" id="AP005445">
    <property type="protein sequence ID" value="BAD54463.1"/>
    <property type="molecule type" value="Genomic_DNA"/>
</dbReference>
<dbReference type="EMBL" id="AP014962">
    <property type="protein sequence ID" value="BAS99304.1"/>
    <property type="molecule type" value="Genomic_DNA"/>
</dbReference>
<dbReference type="EMBL" id="CM000143">
    <property type="protein sequence ID" value="EAZ38153.1"/>
    <property type="molecule type" value="Genomic_DNA"/>
</dbReference>
<dbReference type="SMR" id="Q5Z6F6"/>
<dbReference type="FunCoup" id="Q5Z6F6">
    <property type="interactions" value="11"/>
</dbReference>
<dbReference type="PaxDb" id="39947-Q5Z6F6"/>
<dbReference type="EnsemblPlants" id="Os06t0698200-00">
    <property type="protein sequence ID" value="Os06t0698200-00"/>
    <property type="gene ID" value="Os06g0698200"/>
</dbReference>
<dbReference type="Gramene" id="Os06t0698200-00">
    <property type="protein sequence ID" value="Os06t0698200-00"/>
    <property type="gene ID" value="Os06g0698200"/>
</dbReference>
<dbReference type="eggNOG" id="KOG0483">
    <property type="taxonomic scope" value="Eukaryota"/>
</dbReference>
<dbReference type="HOGENOM" id="CLU_049516_3_0_1"/>
<dbReference type="InParanoid" id="Q5Z6F6"/>
<dbReference type="OMA" id="EDSFRVH"/>
<dbReference type="Proteomes" id="UP000000763">
    <property type="component" value="Chromosome 6"/>
</dbReference>
<dbReference type="Proteomes" id="UP000007752">
    <property type="component" value="Chromosome 6"/>
</dbReference>
<dbReference type="Proteomes" id="UP000059680">
    <property type="component" value="Chromosome 6"/>
</dbReference>
<dbReference type="GO" id="GO:0005634">
    <property type="term" value="C:nucleus"/>
    <property type="evidence" value="ECO:0007669"/>
    <property type="project" value="UniProtKB-SubCell"/>
</dbReference>
<dbReference type="GO" id="GO:0000981">
    <property type="term" value="F:DNA-binding transcription factor activity, RNA polymerase II-specific"/>
    <property type="evidence" value="ECO:0007669"/>
    <property type="project" value="InterPro"/>
</dbReference>
<dbReference type="GO" id="GO:0043565">
    <property type="term" value="F:sequence-specific DNA binding"/>
    <property type="evidence" value="ECO:0007669"/>
    <property type="project" value="InterPro"/>
</dbReference>
<dbReference type="CDD" id="cd00086">
    <property type="entry name" value="homeodomain"/>
    <property type="match status" value="1"/>
</dbReference>
<dbReference type="Gene3D" id="1.10.10.60">
    <property type="entry name" value="Homeodomain-like"/>
    <property type="match status" value="1"/>
</dbReference>
<dbReference type="InterPro" id="IPR001356">
    <property type="entry name" value="HD"/>
</dbReference>
<dbReference type="InterPro" id="IPR050762">
    <property type="entry name" value="HD-ZIP_Homeobox_LZ_Class_II"/>
</dbReference>
<dbReference type="InterPro" id="IPR017970">
    <property type="entry name" value="Homeobox_CS"/>
</dbReference>
<dbReference type="InterPro" id="IPR009057">
    <property type="entry name" value="Homeodomain-like_sf"/>
</dbReference>
<dbReference type="InterPro" id="IPR003106">
    <property type="entry name" value="Leu_zip_homeo"/>
</dbReference>
<dbReference type="PANTHER" id="PTHR45714">
    <property type="entry name" value="HOMEOBOX-LEUCINE ZIPPER PROTEIN HAT14"/>
    <property type="match status" value="1"/>
</dbReference>
<dbReference type="PANTHER" id="PTHR45714:SF78">
    <property type="entry name" value="HOMEOBOX-LEUCINE ZIPPER PROTEIN HOX18"/>
    <property type="match status" value="1"/>
</dbReference>
<dbReference type="Pfam" id="PF02183">
    <property type="entry name" value="HALZ"/>
    <property type="match status" value="1"/>
</dbReference>
<dbReference type="Pfam" id="PF00046">
    <property type="entry name" value="Homeodomain"/>
    <property type="match status" value="1"/>
</dbReference>
<dbReference type="SMART" id="SM00340">
    <property type="entry name" value="HALZ"/>
    <property type="match status" value="1"/>
</dbReference>
<dbReference type="SMART" id="SM00389">
    <property type="entry name" value="HOX"/>
    <property type="match status" value="1"/>
</dbReference>
<dbReference type="SUPFAM" id="SSF46689">
    <property type="entry name" value="Homeodomain-like"/>
    <property type="match status" value="1"/>
</dbReference>
<dbReference type="PROSITE" id="PS00027">
    <property type="entry name" value="HOMEOBOX_1"/>
    <property type="match status" value="1"/>
</dbReference>
<dbReference type="PROSITE" id="PS50071">
    <property type="entry name" value="HOMEOBOX_2"/>
    <property type="match status" value="1"/>
</dbReference>
<evidence type="ECO:0000250" key="1"/>
<evidence type="ECO:0000255" key="2">
    <source>
        <dbReference type="PROSITE-ProRule" id="PRU00108"/>
    </source>
</evidence>
<evidence type="ECO:0000256" key="3">
    <source>
        <dbReference type="SAM" id="MobiDB-lite"/>
    </source>
</evidence>
<evidence type="ECO:0000269" key="4">
    <source>
    </source>
</evidence>
<evidence type="ECO:0000305" key="5"/>
<gene>
    <name type="primary">HOX18</name>
    <name type="ordered locus">Os06g0698200</name>
    <name type="ordered locus">LOC_Os06g48290</name>
    <name type="ORF">OsJ_021636</name>
    <name type="ORF">P0028E05.36</name>
</gene>
<proteinExistence type="evidence at transcript level"/>
<comment type="function">
    <text evidence="1">Probable transcription factor.</text>
</comment>
<comment type="subcellular location">
    <subcellularLocation>
        <location evidence="5">Nucleus</location>
    </subcellularLocation>
</comment>
<comment type="tissue specificity">
    <text evidence="4">Expressed in roots, leaf sheaths and blades and panicles.</text>
</comment>
<comment type="similarity">
    <text evidence="5">Belongs to the HD-ZIP homeobox family. Class II subfamily.</text>
</comment>
<organism>
    <name type="scientific">Oryza sativa subsp. japonica</name>
    <name type="common">Rice</name>
    <dbReference type="NCBI Taxonomy" id="39947"/>
    <lineage>
        <taxon>Eukaryota</taxon>
        <taxon>Viridiplantae</taxon>
        <taxon>Streptophyta</taxon>
        <taxon>Embryophyta</taxon>
        <taxon>Tracheophyta</taxon>
        <taxon>Spermatophyta</taxon>
        <taxon>Magnoliopsida</taxon>
        <taxon>Liliopsida</taxon>
        <taxon>Poales</taxon>
        <taxon>Poaceae</taxon>
        <taxon>BOP clade</taxon>
        <taxon>Oryzoideae</taxon>
        <taxon>Oryzeae</taxon>
        <taxon>Oryzinae</taxon>
        <taxon>Oryza</taxon>
        <taxon>Oryza sativa</taxon>
    </lineage>
</organism>
<name>HOX18_ORYSJ</name>
<reference key="1">
    <citation type="journal article" date="2005" name="Nature">
        <title>The map-based sequence of the rice genome.</title>
        <authorList>
            <consortium name="International rice genome sequencing project (IRGSP)"/>
        </authorList>
    </citation>
    <scope>NUCLEOTIDE SEQUENCE [LARGE SCALE GENOMIC DNA]</scope>
    <source>
        <strain>cv. Nipponbare</strain>
    </source>
</reference>
<reference key="2">
    <citation type="journal article" date="2013" name="Rice">
        <title>Improvement of the Oryza sativa Nipponbare reference genome using next generation sequence and optical map data.</title>
        <authorList>
            <person name="Kawahara Y."/>
            <person name="de la Bastide M."/>
            <person name="Hamilton J.P."/>
            <person name="Kanamori H."/>
            <person name="McCombie W.R."/>
            <person name="Ouyang S."/>
            <person name="Schwartz D.C."/>
            <person name="Tanaka T."/>
            <person name="Wu J."/>
            <person name="Zhou S."/>
            <person name="Childs K.L."/>
            <person name="Davidson R.M."/>
            <person name="Lin H."/>
            <person name="Quesada-Ocampo L."/>
            <person name="Vaillancourt B."/>
            <person name="Sakai H."/>
            <person name="Lee S.S."/>
            <person name="Kim J."/>
            <person name="Numa H."/>
            <person name="Itoh T."/>
            <person name="Buell C.R."/>
            <person name="Matsumoto T."/>
        </authorList>
    </citation>
    <scope>GENOME REANNOTATION</scope>
    <source>
        <strain>cv. Nipponbare</strain>
    </source>
</reference>
<reference key="3">
    <citation type="journal article" date="2005" name="PLoS Biol.">
        <title>The genomes of Oryza sativa: a history of duplications.</title>
        <authorList>
            <person name="Yu J."/>
            <person name="Wang J."/>
            <person name="Lin W."/>
            <person name="Li S."/>
            <person name="Li H."/>
            <person name="Zhou J."/>
            <person name="Ni P."/>
            <person name="Dong W."/>
            <person name="Hu S."/>
            <person name="Zeng C."/>
            <person name="Zhang J."/>
            <person name="Zhang Y."/>
            <person name="Li R."/>
            <person name="Xu Z."/>
            <person name="Li S."/>
            <person name="Li X."/>
            <person name="Zheng H."/>
            <person name="Cong L."/>
            <person name="Lin L."/>
            <person name="Yin J."/>
            <person name="Geng J."/>
            <person name="Li G."/>
            <person name="Shi J."/>
            <person name="Liu J."/>
            <person name="Lv H."/>
            <person name="Li J."/>
            <person name="Wang J."/>
            <person name="Deng Y."/>
            <person name="Ran L."/>
            <person name="Shi X."/>
            <person name="Wang X."/>
            <person name="Wu Q."/>
            <person name="Li C."/>
            <person name="Ren X."/>
            <person name="Wang J."/>
            <person name="Wang X."/>
            <person name="Li D."/>
            <person name="Liu D."/>
            <person name="Zhang X."/>
            <person name="Ji Z."/>
            <person name="Zhao W."/>
            <person name="Sun Y."/>
            <person name="Zhang Z."/>
            <person name="Bao J."/>
            <person name="Han Y."/>
            <person name="Dong L."/>
            <person name="Ji J."/>
            <person name="Chen P."/>
            <person name="Wu S."/>
            <person name="Liu J."/>
            <person name="Xiao Y."/>
            <person name="Bu D."/>
            <person name="Tan J."/>
            <person name="Yang L."/>
            <person name="Ye C."/>
            <person name="Zhang J."/>
            <person name="Xu J."/>
            <person name="Zhou Y."/>
            <person name="Yu Y."/>
            <person name="Zhang B."/>
            <person name="Zhuang S."/>
            <person name="Wei H."/>
            <person name="Liu B."/>
            <person name="Lei M."/>
            <person name="Yu H."/>
            <person name="Li Y."/>
            <person name="Xu H."/>
            <person name="Wei S."/>
            <person name="He X."/>
            <person name="Fang L."/>
            <person name="Zhang Z."/>
            <person name="Zhang Y."/>
            <person name="Huang X."/>
            <person name="Su Z."/>
            <person name="Tong W."/>
            <person name="Li J."/>
            <person name="Tong Z."/>
            <person name="Li S."/>
            <person name="Ye J."/>
            <person name="Wang L."/>
            <person name="Fang L."/>
            <person name="Lei T."/>
            <person name="Chen C.-S."/>
            <person name="Chen H.-C."/>
            <person name="Xu Z."/>
            <person name="Li H."/>
            <person name="Huang H."/>
            <person name="Zhang F."/>
            <person name="Xu H."/>
            <person name="Li N."/>
            <person name="Zhao C."/>
            <person name="Li S."/>
            <person name="Dong L."/>
            <person name="Huang Y."/>
            <person name="Li L."/>
            <person name="Xi Y."/>
            <person name="Qi Q."/>
            <person name="Li W."/>
            <person name="Zhang B."/>
            <person name="Hu W."/>
            <person name="Zhang Y."/>
            <person name="Tian X."/>
            <person name="Jiao Y."/>
            <person name="Liang X."/>
            <person name="Jin J."/>
            <person name="Gao L."/>
            <person name="Zheng W."/>
            <person name="Hao B."/>
            <person name="Liu S.-M."/>
            <person name="Wang W."/>
            <person name="Yuan L."/>
            <person name="Cao M."/>
            <person name="McDermott J."/>
            <person name="Samudrala R."/>
            <person name="Wang J."/>
            <person name="Wong G.K.-S."/>
            <person name="Yang H."/>
        </authorList>
    </citation>
    <scope>NUCLEOTIDE SEQUENCE [LARGE SCALE GENOMIC DNA]</scope>
    <source>
        <strain>cv. Nipponbare</strain>
    </source>
</reference>
<reference key="4">
    <citation type="journal article" date="2008" name="Plant Mol. Biol.">
        <title>A genome-wide survey of HD-Zip genes in rice and analysis of drought-responsive family members.</title>
        <authorList>
            <person name="Agalou A."/>
            <person name="Purwantomo S."/>
            <person name="Oevernaes E."/>
            <person name="Johannesson H."/>
            <person name="Zhu X."/>
            <person name="Estiati A."/>
            <person name="de Kam R.J."/>
            <person name="Engstroem P."/>
            <person name="Slamet-Loedin I.H."/>
            <person name="Zhu Z."/>
            <person name="Wang M."/>
            <person name="Xiong L."/>
            <person name="Meijer A.H."/>
            <person name="Ouwerkerk P.B.F."/>
        </authorList>
    </citation>
    <scope>TISSUE SPECIFICITY</scope>
    <scope>GENE FAMILY</scope>
    <scope>NOMENCLATURE</scope>
</reference>
<accession>Q5Z6F6</accession>
<accession>A0A0P0X0H4</accession>
<keyword id="KW-0238">DNA-binding</keyword>
<keyword id="KW-0371">Homeobox</keyword>
<keyword id="KW-0539">Nucleus</keyword>
<keyword id="KW-1185">Reference proteome</keyword>
<keyword id="KW-0804">Transcription</keyword>
<keyword id="KW-0805">Transcription regulation</keyword>
<protein>
    <recommendedName>
        <fullName>Homeobox-leucine zipper protein HOX18</fullName>
    </recommendedName>
    <alternativeName>
        <fullName>HD-ZIP protein HOX18</fullName>
    </alternativeName>
    <alternativeName>
        <fullName>Homeodomain transcription factor HOX18</fullName>
    </alternativeName>
    <alternativeName>
        <fullName>OsHox18</fullName>
    </alternativeName>
</protein>